<evidence type="ECO:0000255" key="1">
    <source>
        <dbReference type="HAMAP-Rule" id="MF_00075"/>
    </source>
</evidence>
<accession>A0K3P6</accession>
<dbReference type="EMBL" id="CP000458">
    <property type="protein sequence ID" value="ABK07123.1"/>
    <property type="molecule type" value="Genomic_DNA"/>
</dbReference>
<dbReference type="BMRB" id="A0K3P6"/>
<dbReference type="SMR" id="A0K3P6"/>
<dbReference type="KEGG" id="bch:Bcen2424_0369"/>
<dbReference type="HOGENOM" id="CLU_151267_1_0_4"/>
<dbReference type="GO" id="GO:0005829">
    <property type="term" value="C:cytosol"/>
    <property type="evidence" value="ECO:0007669"/>
    <property type="project" value="TreeGrafter"/>
</dbReference>
<dbReference type="GO" id="GO:0043022">
    <property type="term" value="F:ribosome binding"/>
    <property type="evidence" value="ECO:0007669"/>
    <property type="project" value="UniProtKB-UniRule"/>
</dbReference>
<dbReference type="GO" id="GO:0019843">
    <property type="term" value="F:rRNA binding"/>
    <property type="evidence" value="ECO:0007669"/>
    <property type="project" value="UniProtKB-UniRule"/>
</dbReference>
<dbReference type="GO" id="GO:0003743">
    <property type="term" value="F:translation initiation factor activity"/>
    <property type="evidence" value="ECO:0007669"/>
    <property type="project" value="UniProtKB-UniRule"/>
</dbReference>
<dbReference type="CDD" id="cd04451">
    <property type="entry name" value="S1_IF1"/>
    <property type="match status" value="1"/>
</dbReference>
<dbReference type="FunFam" id="2.40.50.140:FF:000002">
    <property type="entry name" value="Translation initiation factor IF-1"/>
    <property type="match status" value="1"/>
</dbReference>
<dbReference type="Gene3D" id="2.40.50.140">
    <property type="entry name" value="Nucleic acid-binding proteins"/>
    <property type="match status" value="1"/>
</dbReference>
<dbReference type="HAMAP" id="MF_00075">
    <property type="entry name" value="IF_1"/>
    <property type="match status" value="1"/>
</dbReference>
<dbReference type="InterPro" id="IPR012340">
    <property type="entry name" value="NA-bd_OB-fold"/>
</dbReference>
<dbReference type="InterPro" id="IPR006196">
    <property type="entry name" value="RNA-binding_domain_S1_IF1"/>
</dbReference>
<dbReference type="InterPro" id="IPR003029">
    <property type="entry name" value="S1_domain"/>
</dbReference>
<dbReference type="InterPro" id="IPR004368">
    <property type="entry name" value="TIF_IF1"/>
</dbReference>
<dbReference type="NCBIfam" id="TIGR00008">
    <property type="entry name" value="infA"/>
    <property type="match status" value="1"/>
</dbReference>
<dbReference type="PANTHER" id="PTHR33370">
    <property type="entry name" value="TRANSLATION INITIATION FACTOR IF-1, CHLOROPLASTIC"/>
    <property type="match status" value="1"/>
</dbReference>
<dbReference type="PANTHER" id="PTHR33370:SF1">
    <property type="entry name" value="TRANSLATION INITIATION FACTOR IF-1, CHLOROPLASTIC"/>
    <property type="match status" value="1"/>
</dbReference>
<dbReference type="Pfam" id="PF01176">
    <property type="entry name" value="eIF-1a"/>
    <property type="match status" value="1"/>
</dbReference>
<dbReference type="SMART" id="SM00316">
    <property type="entry name" value="S1"/>
    <property type="match status" value="1"/>
</dbReference>
<dbReference type="SUPFAM" id="SSF50249">
    <property type="entry name" value="Nucleic acid-binding proteins"/>
    <property type="match status" value="1"/>
</dbReference>
<dbReference type="PROSITE" id="PS50832">
    <property type="entry name" value="S1_IF1_TYPE"/>
    <property type="match status" value="1"/>
</dbReference>
<gene>
    <name evidence="1" type="primary">infA1</name>
    <name type="ordered locus">Bcen2424_0369</name>
</gene>
<feature type="chain" id="PRO_0000338776" description="Translation initiation factor IF-1 1">
    <location>
        <begin position="1"/>
        <end position="72"/>
    </location>
</feature>
<feature type="domain" description="S1-like" evidence="1">
    <location>
        <begin position="1"/>
        <end position="72"/>
    </location>
</feature>
<name>IF11_BURCH</name>
<reference key="1">
    <citation type="submission" date="2006-08" db="EMBL/GenBank/DDBJ databases">
        <title>Complete sequence of chromosome 1 of Burkholderia cenocepacia HI2424.</title>
        <authorList>
            <person name="Copeland A."/>
            <person name="Lucas S."/>
            <person name="Lapidus A."/>
            <person name="Barry K."/>
            <person name="Detter J.C."/>
            <person name="Glavina del Rio T."/>
            <person name="Hammon N."/>
            <person name="Israni S."/>
            <person name="Pitluck S."/>
            <person name="Chain P."/>
            <person name="Malfatti S."/>
            <person name="Shin M."/>
            <person name="Vergez L."/>
            <person name="Schmutz J."/>
            <person name="Larimer F."/>
            <person name="Land M."/>
            <person name="Hauser L."/>
            <person name="Kyrpides N."/>
            <person name="Kim E."/>
            <person name="LiPuma J.J."/>
            <person name="Gonzalez C.F."/>
            <person name="Konstantinidis K."/>
            <person name="Tiedje J.M."/>
            <person name="Richardson P."/>
        </authorList>
    </citation>
    <scope>NUCLEOTIDE SEQUENCE [LARGE SCALE GENOMIC DNA]</scope>
    <source>
        <strain>HI2424</strain>
    </source>
</reference>
<protein>
    <recommendedName>
        <fullName evidence="1">Translation initiation factor IF-1 1</fullName>
    </recommendedName>
</protein>
<comment type="function">
    <text evidence="1">One of the essential components for the initiation of protein synthesis. Stabilizes the binding of IF-2 and IF-3 on the 30S subunit to which N-formylmethionyl-tRNA(fMet) subsequently binds. Helps modulate mRNA selection, yielding the 30S pre-initiation complex (PIC). Upon addition of the 50S ribosomal subunit IF-1, IF-2 and IF-3 are released leaving the mature 70S translation initiation complex.</text>
</comment>
<comment type="subunit">
    <text evidence="1">Component of the 30S ribosomal translation pre-initiation complex which assembles on the 30S ribosome in the order IF-2 and IF-3, IF-1 and N-formylmethionyl-tRNA(fMet); mRNA recruitment can occur at any time during PIC assembly.</text>
</comment>
<comment type="subcellular location">
    <subcellularLocation>
        <location evidence="1">Cytoplasm</location>
    </subcellularLocation>
</comment>
<comment type="similarity">
    <text evidence="1">Belongs to the IF-1 family.</text>
</comment>
<keyword id="KW-0963">Cytoplasm</keyword>
<keyword id="KW-0396">Initiation factor</keyword>
<keyword id="KW-0648">Protein biosynthesis</keyword>
<keyword id="KW-0694">RNA-binding</keyword>
<keyword id="KW-0699">rRNA-binding</keyword>
<sequence>MAKDDVIQMQGEVIENLPNATFRVKLENGHVVLGHISGKMRMHYIRILPGDKVTVELTPYDLSRARIVFRAK</sequence>
<organism>
    <name type="scientific">Burkholderia cenocepacia (strain HI2424)</name>
    <dbReference type="NCBI Taxonomy" id="331272"/>
    <lineage>
        <taxon>Bacteria</taxon>
        <taxon>Pseudomonadati</taxon>
        <taxon>Pseudomonadota</taxon>
        <taxon>Betaproteobacteria</taxon>
        <taxon>Burkholderiales</taxon>
        <taxon>Burkholderiaceae</taxon>
        <taxon>Burkholderia</taxon>
        <taxon>Burkholderia cepacia complex</taxon>
    </lineage>
</organism>
<proteinExistence type="inferred from homology"/>